<sequence length="557" mass="61864">MAAPMLRWGCRGRRWAFARVDGGSCHRRGAPTGSTSNQIRGESSVAQQPLHTAQKTRKGEHKWAAVVGLEIHAQISSNSKLFSGSQVRFSAPPNSLVSFFDASLPGTLPVLNRRCVEAAVMTGLALNCHINKKSLFDRKHYFYADLPAGYQITQQRLPIAVNGSLIYGVCAGKKQSQVIPKTVRIKQIQLEQDSGKSLHDNLRSQTLIDLNRAGVGLLEVVLEPDMSCGEEAATAVRELQLILQALGTSQANMAEGQLRVDANISVHHPGEPLGVRTEVKNLNSIRFLAKAIDYEIQRQINELENGGEILNETRSFHHKLGCTMSMRDKEGKQDYRFMPEPNLPPLVLYDATSLPAGADPQQVINIDQIRETLPELPSVTREKLVQQYGMLLEHSFTLLNEVGLLEFFQNVIKETRAEPKKVTSWVLNTFLGYLKQQNLAVSESPVTPSALAELLDLLDSRTISSSAAKQVFEELWKREGKTPGQIVSEKQLELMQDQGALEQLCHSVMEAHPQVVMDVKNRNPRAINKLIGLVRKATQSRADPVMIKEILEKKLSL</sequence>
<evidence type="ECO:0000250" key="1">
    <source>
        <dbReference type="UniProtKB" id="Q99JT1"/>
    </source>
</evidence>
<evidence type="ECO:0000255" key="2"/>
<evidence type="ECO:0000255" key="3">
    <source>
        <dbReference type="HAMAP-Rule" id="MF_03147"/>
    </source>
</evidence>
<evidence type="ECO:0000256" key="4">
    <source>
        <dbReference type="SAM" id="MobiDB-lite"/>
    </source>
</evidence>
<evidence type="ECO:0000269" key="5">
    <source>
    </source>
</evidence>
<evidence type="ECO:0000269" key="6">
    <source>
    </source>
</evidence>
<evidence type="ECO:0000269" key="7">
    <source>
    </source>
</evidence>
<evidence type="ECO:0000305" key="8"/>
<evidence type="ECO:0000312" key="9">
    <source>
        <dbReference type="HGNC" id="HGNC:8849"/>
    </source>
</evidence>
<protein>
    <recommendedName>
        <fullName evidence="3">Glutamyl-tRNA(Gln) amidotransferase subunit B, mitochondrial</fullName>
        <shortName evidence="3">Glu-AdT subunit B</shortName>
        <ecNumber evidence="3">6.3.5.-</ecNumber>
    </recommendedName>
    <alternativeName>
        <fullName>Cytochrome c oxidase assembly factor PET112 homolog</fullName>
    </alternativeName>
</protein>
<dbReference type="EC" id="6.3.5.-" evidence="3"/>
<dbReference type="EMBL" id="AF026851">
    <property type="protein sequence ID" value="AAD08640.1"/>
    <property type="molecule type" value="mRNA"/>
</dbReference>
<dbReference type="EMBL" id="AF151033">
    <property type="protein sequence ID" value="AAF36119.1"/>
    <property type="status" value="ALT_FRAME"/>
    <property type="molecule type" value="mRNA"/>
</dbReference>
<dbReference type="EMBL" id="AK312957">
    <property type="protein sequence ID" value="BAG35796.1"/>
    <property type="molecule type" value="mRNA"/>
</dbReference>
<dbReference type="EMBL" id="AK222887">
    <property type="protein sequence ID" value="BAD96607.1"/>
    <property type="molecule type" value="mRNA"/>
</dbReference>
<dbReference type="EMBL" id="AC092611">
    <property type="protein sequence ID" value="AAY40897.1"/>
    <property type="molecule type" value="Genomic_DNA"/>
</dbReference>
<dbReference type="EMBL" id="CH471056">
    <property type="protein sequence ID" value="EAX04981.1"/>
    <property type="molecule type" value="Genomic_DNA"/>
</dbReference>
<dbReference type="EMBL" id="BC130348">
    <property type="protein sequence ID" value="AAI30349.1"/>
    <property type="molecule type" value="mRNA"/>
</dbReference>
<dbReference type="EMBL" id="BC136547">
    <property type="protein sequence ID" value="AAI36548.1"/>
    <property type="molecule type" value="mRNA"/>
</dbReference>
<dbReference type="EMBL" id="AB019410">
    <property type="status" value="NOT_ANNOTATED_CDS"/>
    <property type="molecule type" value="mRNA"/>
</dbReference>
<dbReference type="CCDS" id="CCDS3776.1"/>
<dbReference type="RefSeq" id="NP_004555.1">
    <property type="nucleotide sequence ID" value="NM_004564.3"/>
</dbReference>
<dbReference type="SMR" id="O75879"/>
<dbReference type="BioGRID" id="111211">
    <property type="interactions" value="142"/>
</dbReference>
<dbReference type="ComplexPortal" id="CPX-6174">
    <property type="entry name" value="Mitochondrial glutamyl-tRNA(Gln) amidotransferase complex"/>
</dbReference>
<dbReference type="CORUM" id="O75879"/>
<dbReference type="DIP" id="DIP-48968N"/>
<dbReference type="FunCoup" id="O75879">
    <property type="interactions" value="890"/>
</dbReference>
<dbReference type="IntAct" id="O75879">
    <property type="interactions" value="50"/>
</dbReference>
<dbReference type="MINT" id="O75879"/>
<dbReference type="STRING" id="9606.ENSP00000263985"/>
<dbReference type="DrugBank" id="DB00130">
    <property type="generic name" value="L-Glutamine"/>
</dbReference>
<dbReference type="GlyGen" id="O75879">
    <property type="glycosylation" value="1 site"/>
</dbReference>
<dbReference type="iPTMnet" id="O75879"/>
<dbReference type="PhosphoSitePlus" id="O75879"/>
<dbReference type="SwissPalm" id="O75879"/>
<dbReference type="BioMuta" id="GATB"/>
<dbReference type="jPOST" id="O75879"/>
<dbReference type="MassIVE" id="O75879"/>
<dbReference type="PaxDb" id="9606-ENSP00000263985"/>
<dbReference type="PeptideAtlas" id="O75879"/>
<dbReference type="ProteomicsDB" id="50235"/>
<dbReference type="Pumba" id="O75879"/>
<dbReference type="Antibodypedia" id="27767">
    <property type="antibodies" value="128 antibodies from 19 providers"/>
</dbReference>
<dbReference type="DNASU" id="5188"/>
<dbReference type="Ensembl" id="ENST00000263985.11">
    <property type="protein sequence ID" value="ENSP00000263985.6"/>
    <property type="gene ID" value="ENSG00000059691.12"/>
</dbReference>
<dbReference type="GeneID" id="5188"/>
<dbReference type="KEGG" id="hsa:5188"/>
<dbReference type="MANE-Select" id="ENST00000263985.11">
    <property type="protein sequence ID" value="ENSP00000263985.6"/>
    <property type="RefSeq nucleotide sequence ID" value="NM_004564.3"/>
    <property type="RefSeq protein sequence ID" value="NP_004555.1"/>
</dbReference>
<dbReference type="UCSC" id="uc003iml.5">
    <property type="organism name" value="human"/>
</dbReference>
<dbReference type="AGR" id="HGNC:8849"/>
<dbReference type="CTD" id="5188"/>
<dbReference type="DisGeNET" id="5188"/>
<dbReference type="GeneCards" id="GATB"/>
<dbReference type="HGNC" id="HGNC:8849">
    <property type="gene designation" value="GATB"/>
</dbReference>
<dbReference type="HPA" id="ENSG00000059691">
    <property type="expression patterns" value="Low tissue specificity"/>
</dbReference>
<dbReference type="MalaCards" id="GATB"/>
<dbReference type="MIM" id="603645">
    <property type="type" value="gene"/>
</dbReference>
<dbReference type="MIM" id="618838">
    <property type="type" value="phenotype"/>
</dbReference>
<dbReference type="neXtProt" id="NX_O75879"/>
<dbReference type="OpenTargets" id="ENSG00000059691"/>
<dbReference type="PharmGKB" id="PA33191"/>
<dbReference type="VEuPathDB" id="HostDB:ENSG00000059691"/>
<dbReference type="eggNOG" id="KOG2438">
    <property type="taxonomic scope" value="Eukaryota"/>
</dbReference>
<dbReference type="GeneTree" id="ENSGT00390000016644"/>
<dbReference type="HOGENOM" id="CLU_019240_0_1_1"/>
<dbReference type="InParanoid" id="O75879"/>
<dbReference type="OMA" id="ARKWWMG"/>
<dbReference type="OrthoDB" id="1722066at2759"/>
<dbReference type="PAN-GO" id="O75879">
    <property type="GO annotations" value="5 GO annotations based on evolutionary models"/>
</dbReference>
<dbReference type="PhylomeDB" id="O75879"/>
<dbReference type="TreeFam" id="TF314355"/>
<dbReference type="BRENDA" id="6.3.5.7">
    <property type="organism ID" value="2681"/>
</dbReference>
<dbReference type="PathwayCommons" id="O75879"/>
<dbReference type="SignaLink" id="O75879"/>
<dbReference type="BioGRID-ORCS" id="5188">
    <property type="hits" value="220 hits in 1168 CRISPR screens"/>
</dbReference>
<dbReference type="ChiTaRS" id="GATB">
    <property type="organism name" value="human"/>
</dbReference>
<dbReference type="GenomeRNAi" id="5188"/>
<dbReference type="Pharos" id="O75879">
    <property type="development level" value="Tbio"/>
</dbReference>
<dbReference type="PRO" id="PR:O75879"/>
<dbReference type="Proteomes" id="UP000005640">
    <property type="component" value="Chromosome 4"/>
</dbReference>
<dbReference type="RNAct" id="O75879">
    <property type="molecule type" value="protein"/>
</dbReference>
<dbReference type="Bgee" id="ENSG00000059691">
    <property type="expression patterns" value="Expressed in C1 segment of cervical spinal cord and 173 other cell types or tissues"/>
</dbReference>
<dbReference type="ExpressionAtlas" id="O75879">
    <property type="expression patterns" value="baseline and differential"/>
</dbReference>
<dbReference type="GO" id="GO:0030956">
    <property type="term" value="C:glutamyl-tRNA(Gln) amidotransferase complex"/>
    <property type="evidence" value="ECO:0000314"/>
    <property type="project" value="UniProtKB"/>
</dbReference>
<dbReference type="GO" id="GO:0005739">
    <property type="term" value="C:mitochondrion"/>
    <property type="evidence" value="ECO:0000314"/>
    <property type="project" value="UniProtKB"/>
</dbReference>
<dbReference type="GO" id="GO:0005524">
    <property type="term" value="F:ATP binding"/>
    <property type="evidence" value="ECO:0007669"/>
    <property type="project" value="UniProtKB-KW"/>
</dbReference>
<dbReference type="GO" id="GO:0050567">
    <property type="term" value="F:glutaminyl-tRNA synthase (glutamine-hydrolyzing) activity"/>
    <property type="evidence" value="ECO:0007669"/>
    <property type="project" value="UniProtKB-UniRule"/>
</dbReference>
<dbReference type="GO" id="GO:0070681">
    <property type="term" value="P:glutaminyl-tRNAGln biosynthesis via transamidation"/>
    <property type="evidence" value="ECO:0000314"/>
    <property type="project" value="UniProtKB"/>
</dbReference>
<dbReference type="GO" id="GO:0032543">
    <property type="term" value="P:mitochondrial translation"/>
    <property type="evidence" value="ECO:0000315"/>
    <property type="project" value="UniProtKB"/>
</dbReference>
<dbReference type="FunFam" id="1.10.10.410:FF:000001">
    <property type="entry name" value="Aspartyl/glutamyl-tRNA(Asn/Gln) amidotransferase subunit B"/>
    <property type="match status" value="1"/>
</dbReference>
<dbReference type="Gene3D" id="1.10.10.410">
    <property type="match status" value="1"/>
</dbReference>
<dbReference type="HAMAP" id="MF_00121">
    <property type="entry name" value="GatB"/>
    <property type="match status" value="1"/>
</dbReference>
<dbReference type="InterPro" id="IPR017959">
    <property type="entry name" value="Asn/Gln-tRNA_amidoTrfase_suB/E"/>
</dbReference>
<dbReference type="InterPro" id="IPR006075">
    <property type="entry name" value="Asn/Gln-tRNA_Trfase_suB/E_cat"/>
</dbReference>
<dbReference type="InterPro" id="IPR018027">
    <property type="entry name" value="Asn/Gln_amidotransferase"/>
</dbReference>
<dbReference type="InterPro" id="IPR003789">
    <property type="entry name" value="Asn/Gln_tRNA_amidoTrase-B-like"/>
</dbReference>
<dbReference type="InterPro" id="IPR004413">
    <property type="entry name" value="GatB"/>
</dbReference>
<dbReference type="InterPro" id="IPR023168">
    <property type="entry name" value="GatB_Yqey_C_2"/>
</dbReference>
<dbReference type="InterPro" id="IPR017958">
    <property type="entry name" value="Gln-tRNA_amidoTrfase_suB_CS"/>
</dbReference>
<dbReference type="InterPro" id="IPR014746">
    <property type="entry name" value="Gln_synth/guanido_kin_cat_dom"/>
</dbReference>
<dbReference type="NCBIfam" id="TIGR00133">
    <property type="entry name" value="gatB"/>
    <property type="match status" value="1"/>
</dbReference>
<dbReference type="NCBIfam" id="NF004012">
    <property type="entry name" value="PRK05477.1-2"/>
    <property type="match status" value="1"/>
</dbReference>
<dbReference type="NCBIfam" id="NF004014">
    <property type="entry name" value="PRK05477.1-4"/>
    <property type="match status" value="1"/>
</dbReference>
<dbReference type="PANTHER" id="PTHR11659">
    <property type="entry name" value="GLUTAMYL-TRNA GLN AMIDOTRANSFERASE SUBUNIT B MITOCHONDRIAL AND PROKARYOTIC PET112-RELATED"/>
    <property type="match status" value="1"/>
</dbReference>
<dbReference type="PANTHER" id="PTHR11659:SF0">
    <property type="entry name" value="GLUTAMYL-TRNA(GLN) AMIDOTRANSFERASE SUBUNIT B, MITOCHONDRIAL"/>
    <property type="match status" value="1"/>
</dbReference>
<dbReference type="Pfam" id="PF02934">
    <property type="entry name" value="GatB_N"/>
    <property type="match status" value="1"/>
</dbReference>
<dbReference type="Pfam" id="PF02637">
    <property type="entry name" value="GatB_Yqey"/>
    <property type="match status" value="1"/>
</dbReference>
<dbReference type="SMART" id="SM00845">
    <property type="entry name" value="GatB_Yqey"/>
    <property type="match status" value="1"/>
</dbReference>
<dbReference type="SUPFAM" id="SSF89095">
    <property type="entry name" value="GatB/YqeY motif"/>
    <property type="match status" value="1"/>
</dbReference>
<dbReference type="SUPFAM" id="SSF55931">
    <property type="entry name" value="Glutamine synthetase/guanido kinase"/>
    <property type="match status" value="1"/>
</dbReference>
<dbReference type="PROSITE" id="PS01234">
    <property type="entry name" value="GATB"/>
    <property type="match status" value="1"/>
</dbReference>
<keyword id="KW-0067">ATP-binding</keyword>
<keyword id="KW-0436">Ligase</keyword>
<keyword id="KW-0496">Mitochondrion</keyword>
<keyword id="KW-0547">Nucleotide-binding</keyword>
<keyword id="KW-1274">Primary mitochondrial disease</keyword>
<keyword id="KW-0648">Protein biosynthesis</keyword>
<keyword id="KW-1267">Proteomics identification</keyword>
<keyword id="KW-1185">Reference proteome</keyword>
<keyword id="KW-0809">Transit peptide</keyword>
<proteinExistence type="evidence at protein level"/>
<gene>
    <name evidence="3 9" type="primary">GATB</name>
    <name evidence="3" type="synonym">PET112</name>
    <name evidence="3" type="synonym">PET112L</name>
    <name type="ORF">HSPC199</name>
</gene>
<comment type="function">
    <text evidence="3 5">Allows the formation of correctly charged Gln-tRNA(Gln) through the transamidation of misacylated Glu-tRNA(Gln) in the mitochondria. The reaction takes place in the presence of glutamine and ATP through an activated gamma-phospho-Glu-tRNA(Gln).</text>
</comment>
<comment type="catalytic activity">
    <reaction evidence="3">
        <text>L-glutamyl-tRNA(Gln) + L-glutamine + ATP + H2O = L-glutaminyl-tRNA(Gln) + L-glutamate + ADP + phosphate + H(+)</text>
        <dbReference type="Rhea" id="RHEA:17521"/>
        <dbReference type="Rhea" id="RHEA-COMP:9681"/>
        <dbReference type="Rhea" id="RHEA-COMP:9684"/>
        <dbReference type="ChEBI" id="CHEBI:15377"/>
        <dbReference type="ChEBI" id="CHEBI:15378"/>
        <dbReference type="ChEBI" id="CHEBI:29985"/>
        <dbReference type="ChEBI" id="CHEBI:30616"/>
        <dbReference type="ChEBI" id="CHEBI:43474"/>
        <dbReference type="ChEBI" id="CHEBI:58359"/>
        <dbReference type="ChEBI" id="CHEBI:78520"/>
        <dbReference type="ChEBI" id="CHEBI:78521"/>
        <dbReference type="ChEBI" id="CHEBI:456216"/>
    </reaction>
</comment>
<comment type="subunit">
    <text>Subunit of the heterotrimeric GatCAB amidotransferase (AdT) complex, composed of A (QRSL1), B (GATB) and C (GATC) subunits.</text>
</comment>
<comment type="interaction">
    <interactant intactId="EBI-6137441">
        <id>O75879</id>
    </interactant>
    <interactant intactId="EBI-12833332">
        <id>Q8N1V8</id>
        <label>LINC01561</label>
    </interactant>
    <organismsDiffer>false</organismsDiffer>
    <experiments>2</experiments>
</comment>
<comment type="interaction">
    <interactant intactId="EBI-6137441">
        <id>O75879</id>
    </interactant>
    <interactant intactId="EBI-2856796">
        <id>Q9H0R6</id>
        <label>QRSL1</label>
    </interactant>
    <organismsDiffer>false</organismsDiffer>
    <experiments>4</experiments>
</comment>
<comment type="subcellular location">
    <subcellularLocation>
        <location evidence="3 7">Mitochondrion</location>
    </subcellularLocation>
</comment>
<comment type="tissue specificity">
    <text evidence="7">Predominantly expressed in tissues characterized by high rates of oxidative phosphorylation (OxPhos), including muscle and heart.</text>
</comment>
<comment type="disease" evidence="6">
    <disease id="DI-05809">
        <name>Combined oxidative phosphorylation deficiency 41</name>
        <acronym>COXPD41</acronym>
        <description>An autosomal recessive mitochondrial disorder characterized by prenatal onset, fetal hydrops, intrauterine growth retardation, hypertrophic cardiomyopathy, respiratory insufficiency, lactic acidosis, and decreased activities of mitochondrial respiratory complexes I, III, IV, and V. The disorder is lethal, with death occurring in the perinatal period.</description>
        <dbReference type="MIM" id="618838"/>
    </disease>
    <text>The disease may be caused by variants affecting the gene represented in this entry.</text>
</comment>
<comment type="similarity">
    <text evidence="3">Belongs to the GatB/GatE family. GatB subfamily.</text>
</comment>
<comment type="sequence caution" evidence="8">
    <conflict type="frameshift">
        <sequence resource="EMBL-CDS" id="AAF36119"/>
    </conflict>
</comment>
<accession>O75879</accession>
<accession>Q4W5M8</accession>
<accession>Q53GP4</accession>
<accession>Q9P0S6</accession>
<accession>Q9Y2B8</accession>
<reference key="1">
    <citation type="journal article" date="1998" name="Genomics">
        <title>Identification and characterization of human cDNAs specific to BCS1, PET112, SCO1, COX15, and COX11, five genes involved in the formation and function of the mitochondrial respiratory chain.</title>
        <authorList>
            <person name="Petruzzella V."/>
            <person name="Tiranti V."/>
            <person name="Fernandez P."/>
            <person name="Ianna P."/>
            <person name="Carrozzo R."/>
            <person name="Zeviani M."/>
        </authorList>
    </citation>
    <scope>NUCLEOTIDE SEQUENCE [MRNA]</scope>
    <scope>SUBCELLULAR LOCATION</scope>
    <scope>TISSUE SPECIFICITY</scope>
</reference>
<reference key="2">
    <citation type="journal article" date="2000" name="Genome Res.">
        <title>Cloning and functional analysis of cDNAs with open reading frames for 300 previously undefined genes expressed in CD34+ hematopoietic stem/progenitor cells.</title>
        <authorList>
            <person name="Zhang Q.-H."/>
            <person name="Ye M."/>
            <person name="Wu X.-Y."/>
            <person name="Ren S.-X."/>
            <person name="Zhao M."/>
            <person name="Zhao C.-J."/>
            <person name="Fu G."/>
            <person name="Shen Y."/>
            <person name="Fan H.-Y."/>
            <person name="Lu G."/>
            <person name="Zhong M."/>
            <person name="Xu X.-R."/>
            <person name="Han Z.-G."/>
            <person name="Zhang J.-W."/>
            <person name="Tao J."/>
            <person name="Huang Q.-H."/>
            <person name="Zhou J."/>
            <person name="Hu G.-X."/>
            <person name="Gu J."/>
            <person name="Chen S.-J."/>
            <person name="Chen Z."/>
        </authorList>
    </citation>
    <scope>NUCLEOTIDE SEQUENCE [LARGE SCALE MRNA]</scope>
    <source>
        <tissue>Umbilical cord blood</tissue>
    </source>
</reference>
<reference key="3">
    <citation type="journal article" date="2004" name="Nat. Genet.">
        <title>Complete sequencing and characterization of 21,243 full-length human cDNAs.</title>
        <authorList>
            <person name="Ota T."/>
            <person name="Suzuki Y."/>
            <person name="Nishikawa T."/>
            <person name="Otsuki T."/>
            <person name="Sugiyama T."/>
            <person name="Irie R."/>
            <person name="Wakamatsu A."/>
            <person name="Hayashi K."/>
            <person name="Sato H."/>
            <person name="Nagai K."/>
            <person name="Kimura K."/>
            <person name="Makita H."/>
            <person name="Sekine M."/>
            <person name="Obayashi M."/>
            <person name="Nishi T."/>
            <person name="Shibahara T."/>
            <person name="Tanaka T."/>
            <person name="Ishii S."/>
            <person name="Yamamoto J."/>
            <person name="Saito K."/>
            <person name="Kawai Y."/>
            <person name="Isono Y."/>
            <person name="Nakamura Y."/>
            <person name="Nagahari K."/>
            <person name="Murakami K."/>
            <person name="Yasuda T."/>
            <person name="Iwayanagi T."/>
            <person name="Wagatsuma M."/>
            <person name="Shiratori A."/>
            <person name="Sudo H."/>
            <person name="Hosoiri T."/>
            <person name="Kaku Y."/>
            <person name="Kodaira H."/>
            <person name="Kondo H."/>
            <person name="Sugawara M."/>
            <person name="Takahashi M."/>
            <person name="Kanda K."/>
            <person name="Yokoi T."/>
            <person name="Furuya T."/>
            <person name="Kikkawa E."/>
            <person name="Omura Y."/>
            <person name="Abe K."/>
            <person name="Kamihara K."/>
            <person name="Katsuta N."/>
            <person name="Sato K."/>
            <person name="Tanikawa M."/>
            <person name="Yamazaki M."/>
            <person name="Ninomiya K."/>
            <person name="Ishibashi T."/>
            <person name="Yamashita H."/>
            <person name="Murakawa K."/>
            <person name="Fujimori K."/>
            <person name="Tanai H."/>
            <person name="Kimata M."/>
            <person name="Watanabe M."/>
            <person name="Hiraoka S."/>
            <person name="Chiba Y."/>
            <person name="Ishida S."/>
            <person name="Ono Y."/>
            <person name="Takiguchi S."/>
            <person name="Watanabe S."/>
            <person name="Yosida M."/>
            <person name="Hotuta T."/>
            <person name="Kusano J."/>
            <person name="Kanehori K."/>
            <person name="Takahashi-Fujii A."/>
            <person name="Hara H."/>
            <person name="Tanase T.-O."/>
            <person name="Nomura Y."/>
            <person name="Togiya S."/>
            <person name="Komai F."/>
            <person name="Hara R."/>
            <person name="Takeuchi K."/>
            <person name="Arita M."/>
            <person name="Imose N."/>
            <person name="Musashino K."/>
            <person name="Yuuki H."/>
            <person name="Oshima A."/>
            <person name="Sasaki N."/>
            <person name="Aotsuka S."/>
            <person name="Yoshikawa Y."/>
            <person name="Matsunawa H."/>
            <person name="Ichihara T."/>
            <person name="Shiohata N."/>
            <person name="Sano S."/>
            <person name="Moriya S."/>
            <person name="Momiyama H."/>
            <person name="Satoh N."/>
            <person name="Takami S."/>
            <person name="Terashima Y."/>
            <person name="Suzuki O."/>
            <person name="Nakagawa S."/>
            <person name="Senoh A."/>
            <person name="Mizoguchi H."/>
            <person name="Goto Y."/>
            <person name="Shimizu F."/>
            <person name="Wakebe H."/>
            <person name="Hishigaki H."/>
            <person name="Watanabe T."/>
            <person name="Sugiyama A."/>
            <person name="Takemoto M."/>
            <person name="Kawakami B."/>
            <person name="Yamazaki M."/>
            <person name="Watanabe K."/>
            <person name="Kumagai A."/>
            <person name="Itakura S."/>
            <person name="Fukuzumi Y."/>
            <person name="Fujimori Y."/>
            <person name="Komiyama M."/>
            <person name="Tashiro H."/>
            <person name="Tanigami A."/>
            <person name="Fujiwara T."/>
            <person name="Ono T."/>
            <person name="Yamada K."/>
            <person name="Fujii Y."/>
            <person name="Ozaki K."/>
            <person name="Hirao M."/>
            <person name="Ohmori Y."/>
            <person name="Kawabata A."/>
            <person name="Hikiji T."/>
            <person name="Kobatake N."/>
            <person name="Inagaki H."/>
            <person name="Ikema Y."/>
            <person name="Okamoto S."/>
            <person name="Okitani R."/>
            <person name="Kawakami T."/>
            <person name="Noguchi S."/>
            <person name="Itoh T."/>
            <person name="Shigeta K."/>
            <person name="Senba T."/>
            <person name="Matsumura K."/>
            <person name="Nakajima Y."/>
            <person name="Mizuno T."/>
            <person name="Morinaga M."/>
            <person name="Sasaki M."/>
            <person name="Togashi T."/>
            <person name="Oyama M."/>
            <person name="Hata H."/>
            <person name="Watanabe M."/>
            <person name="Komatsu T."/>
            <person name="Mizushima-Sugano J."/>
            <person name="Satoh T."/>
            <person name="Shirai Y."/>
            <person name="Takahashi Y."/>
            <person name="Nakagawa K."/>
            <person name="Okumura K."/>
            <person name="Nagase T."/>
            <person name="Nomura N."/>
            <person name="Kikuchi H."/>
            <person name="Masuho Y."/>
            <person name="Yamashita R."/>
            <person name="Nakai K."/>
            <person name="Yada T."/>
            <person name="Nakamura Y."/>
            <person name="Ohara O."/>
            <person name="Isogai T."/>
            <person name="Sugano S."/>
        </authorList>
    </citation>
    <scope>NUCLEOTIDE SEQUENCE [LARGE SCALE MRNA]</scope>
</reference>
<reference key="4">
    <citation type="submission" date="2005-04" db="EMBL/GenBank/DDBJ databases">
        <authorList>
            <person name="Suzuki Y."/>
            <person name="Sugano S."/>
            <person name="Totoki Y."/>
            <person name="Toyoda A."/>
            <person name="Takeda T."/>
            <person name="Sakaki Y."/>
            <person name="Tanaka A."/>
            <person name="Yokoyama S."/>
        </authorList>
    </citation>
    <scope>NUCLEOTIDE SEQUENCE [LARGE SCALE MRNA]</scope>
    <source>
        <tissue>Kidney</tissue>
    </source>
</reference>
<reference key="5">
    <citation type="journal article" date="2005" name="Nature">
        <title>Generation and annotation of the DNA sequences of human chromosomes 2 and 4.</title>
        <authorList>
            <person name="Hillier L.W."/>
            <person name="Graves T.A."/>
            <person name="Fulton R.S."/>
            <person name="Fulton L.A."/>
            <person name="Pepin K.H."/>
            <person name="Minx P."/>
            <person name="Wagner-McPherson C."/>
            <person name="Layman D."/>
            <person name="Wylie K."/>
            <person name="Sekhon M."/>
            <person name="Becker M.C."/>
            <person name="Fewell G.A."/>
            <person name="Delehaunty K.D."/>
            <person name="Miner T.L."/>
            <person name="Nash W.E."/>
            <person name="Kremitzki C."/>
            <person name="Oddy L."/>
            <person name="Du H."/>
            <person name="Sun H."/>
            <person name="Bradshaw-Cordum H."/>
            <person name="Ali J."/>
            <person name="Carter J."/>
            <person name="Cordes M."/>
            <person name="Harris A."/>
            <person name="Isak A."/>
            <person name="van Brunt A."/>
            <person name="Nguyen C."/>
            <person name="Du F."/>
            <person name="Courtney L."/>
            <person name="Kalicki J."/>
            <person name="Ozersky P."/>
            <person name="Abbott S."/>
            <person name="Armstrong J."/>
            <person name="Belter E.A."/>
            <person name="Caruso L."/>
            <person name="Cedroni M."/>
            <person name="Cotton M."/>
            <person name="Davidson T."/>
            <person name="Desai A."/>
            <person name="Elliott G."/>
            <person name="Erb T."/>
            <person name="Fronick C."/>
            <person name="Gaige T."/>
            <person name="Haakenson W."/>
            <person name="Haglund K."/>
            <person name="Holmes A."/>
            <person name="Harkins R."/>
            <person name="Kim K."/>
            <person name="Kruchowski S.S."/>
            <person name="Strong C.M."/>
            <person name="Grewal N."/>
            <person name="Goyea E."/>
            <person name="Hou S."/>
            <person name="Levy A."/>
            <person name="Martinka S."/>
            <person name="Mead K."/>
            <person name="McLellan M.D."/>
            <person name="Meyer R."/>
            <person name="Randall-Maher J."/>
            <person name="Tomlinson C."/>
            <person name="Dauphin-Kohlberg S."/>
            <person name="Kozlowicz-Reilly A."/>
            <person name="Shah N."/>
            <person name="Swearengen-Shahid S."/>
            <person name="Snider J."/>
            <person name="Strong J.T."/>
            <person name="Thompson J."/>
            <person name="Yoakum M."/>
            <person name="Leonard S."/>
            <person name="Pearman C."/>
            <person name="Trani L."/>
            <person name="Radionenko M."/>
            <person name="Waligorski J.E."/>
            <person name="Wang C."/>
            <person name="Rock S.M."/>
            <person name="Tin-Wollam A.-M."/>
            <person name="Maupin R."/>
            <person name="Latreille P."/>
            <person name="Wendl M.C."/>
            <person name="Yang S.-P."/>
            <person name="Pohl C."/>
            <person name="Wallis J.W."/>
            <person name="Spieth J."/>
            <person name="Bieri T.A."/>
            <person name="Berkowicz N."/>
            <person name="Nelson J.O."/>
            <person name="Osborne J."/>
            <person name="Ding L."/>
            <person name="Meyer R."/>
            <person name="Sabo A."/>
            <person name="Shotland Y."/>
            <person name="Sinha P."/>
            <person name="Wohldmann P.E."/>
            <person name="Cook L.L."/>
            <person name="Hickenbotham M.T."/>
            <person name="Eldred J."/>
            <person name="Williams D."/>
            <person name="Jones T.A."/>
            <person name="She X."/>
            <person name="Ciccarelli F.D."/>
            <person name="Izaurralde E."/>
            <person name="Taylor J."/>
            <person name="Schmutz J."/>
            <person name="Myers R.M."/>
            <person name="Cox D.R."/>
            <person name="Huang X."/>
            <person name="McPherson J.D."/>
            <person name="Mardis E.R."/>
            <person name="Clifton S.W."/>
            <person name="Warren W.C."/>
            <person name="Chinwalla A.T."/>
            <person name="Eddy S.R."/>
            <person name="Marra M.A."/>
            <person name="Ovcharenko I."/>
            <person name="Furey T.S."/>
            <person name="Miller W."/>
            <person name="Eichler E.E."/>
            <person name="Bork P."/>
            <person name="Suyama M."/>
            <person name="Torrents D."/>
            <person name="Waterston R.H."/>
            <person name="Wilson R.K."/>
        </authorList>
    </citation>
    <scope>NUCLEOTIDE SEQUENCE [LARGE SCALE GENOMIC DNA]</scope>
</reference>
<reference key="6">
    <citation type="submission" date="2005-09" db="EMBL/GenBank/DDBJ databases">
        <authorList>
            <person name="Mural R.J."/>
            <person name="Istrail S."/>
            <person name="Sutton G.G."/>
            <person name="Florea L."/>
            <person name="Halpern A.L."/>
            <person name="Mobarry C.M."/>
            <person name="Lippert R."/>
            <person name="Walenz B."/>
            <person name="Shatkay H."/>
            <person name="Dew I."/>
            <person name="Miller J.R."/>
            <person name="Flanigan M.J."/>
            <person name="Edwards N.J."/>
            <person name="Bolanos R."/>
            <person name="Fasulo D."/>
            <person name="Halldorsson B.V."/>
            <person name="Hannenhalli S."/>
            <person name="Turner R."/>
            <person name="Yooseph S."/>
            <person name="Lu F."/>
            <person name="Nusskern D.R."/>
            <person name="Shue B.C."/>
            <person name="Zheng X.H."/>
            <person name="Zhong F."/>
            <person name="Delcher A.L."/>
            <person name="Huson D.H."/>
            <person name="Kravitz S.A."/>
            <person name="Mouchard L."/>
            <person name="Reinert K."/>
            <person name="Remington K.A."/>
            <person name="Clark A.G."/>
            <person name="Waterman M.S."/>
            <person name="Eichler E.E."/>
            <person name="Adams M.D."/>
            <person name="Hunkapiller M.W."/>
            <person name="Myers E.W."/>
            <person name="Venter J.C."/>
        </authorList>
    </citation>
    <scope>NUCLEOTIDE SEQUENCE [LARGE SCALE GENOMIC DNA]</scope>
</reference>
<reference key="7">
    <citation type="journal article" date="2004" name="Genome Res.">
        <title>The status, quality, and expansion of the NIH full-length cDNA project: the Mammalian Gene Collection (MGC).</title>
        <authorList>
            <consortium name="The MGC Project Team"/>
        </authorList>
    </citation>
    <scope>NUCLEOTIDE SEQUENCE [LARGE SCALE MRNA]</scope>
</reference>
<reference key="8">
    <citation type="submission" date="1998-11" db="EMBL/GenBank/DDBJ databases">
        <title>Unique genes expressed in fibroblasts of periodontal ligament.</title>
        <authorList>
            <person name="Yamamoto T."/>
            <person name="Takashiba S."/>
            <person name="Myokai F."/>
            <person name="Washio N."/>
            <person name="Nishimura F."/>
            <person name="Arai H."/>
            <person name="Murayama Y."/>
        </authorList>
    </citation>
    <scope>NUCLEOTIDE SEQUENCE [MRNA] OF 6-557</scope>
    <source>
        <tissue>Periodontal ligament</tissue>
    </source>
</reference>
<reference key="9">
    <citation type="journal article" date="2009" name="Proc. Natl. Acad. Sci. U.S.A.">
        <title>Biogenesis of glutaminyl-mt tRNAGln in human mitochondria.</title>
        <authorList>
            <person name="Nagao A."/>
            <person name="Suzuki T."/>
            <person name="Katoh T."/>
            <person name="Sakaguchi Y."/>
            <person name="Suzuki T."/>
        </authorList>
    </citation>
    <scope>FUNCTION</scope>
</reference>
<reference key="10">
    <citation type="journal article" date="2015" name="Proteomics">
        <title>N-terminome analysis of the human mitochondrial proteome.</title>
        <authorList>
            <person name="Vaca Jacome A.S."/>
            <person name="Rabilloud T."/>
            <person name="Schaeffer-Reiss C."/>
            <person name="Rompais M."/>
            <person name="Ayoub D."/>
            <person name="Lane L."/>
            <person name="Bairoch A."/>
            <person name="Van Dorsselaer A."/>
            <person name="Carapito C."/>
        </authorList>
    </citation>
    <scope>IDENTIFICATION BY MASS SPECTROMETRY [LARGE SCALE ANALYSIS]</scope>
</reference>
<reference key="11">
    <citation type="journal article" date="2018" name="Nat. Commun.">
        <title>Pathogenic variants in glutamyl-tRNAGln amidotransferase subunits cause a lethal mitochondrial cardiomyopathy disorder.</title>
        <authorList>
            <person name="Friederich M.W."/>
            <person name="Timal S."/>
            <person name="Powell C.A."/>
            <person name="Dallabona C."/>
            <person name="Kurolap A."/>
            <person name="Palacios-Zambrano S."/>
            <person name="Bratkovic D."/>
            <person name="Derks T.G.J."/>
            <person name="Bick D."/>
            <person name="Bouman K."/>
            <person name="Chatfield K.C."/>
            <person name="Damouny-Naoum N."/>
            <person name="Dishop M.K."/>
            <person name="Falik-Zaccai T.C."/>
            <person name="Fares F."/>
            <person name="Fedida A."/>
            <person name="Ferrero I."/>
            <person name="Gallagher R.C."/>
            <person name="Garesse R."/>
            <person name="Gilberti M."/>
            <person name="Gonzalez C."/>
            <person name="Gowan K."/>
            <person name="Habib C."/>
            <person name="Halligan R.K."/>
            <person name="Kalfon L."/>
            <person name="Knight K."/>
            <person name="Lefeber D."/>
            <person name="Mamblona L."/>
            <person name="Mandel H."/>
            <person name="Mory A."/>
            <person name="Ottoson J."/>
            <person name="Paperna T."/>
            <person name="Pruijn G.J.M."/>
            <person name="Rebelo-Guiomar P.F."/>
            <person name="Saada A."/>
            <person name="Sainz B. Jr."/>
            <person name="Salvemini H."/>
            <person name="Schoots M.H."/>
            <person name="Smeitink J.A."/>
            <person name="Szukszto M.J."/>
            <person name="Ter Horst H.J."/>
            <person name="van den Brandt F."/>
            <person name="van Spronsen F.J."/>
            <person name="Veltman J.A."/>
            <person name="Wartchow E."/>
            <person name="Wintjes L.T."/>
            <person name="Zohar Y."/>
            <person name="Fernandez-Moreno M.A."/>
            <person name="Baris H.N."/>
            <person name="Donnini C."/>
            <person name="Minczuk M."/>
            <person name="Rodenburg R.J."/>
            <person name="Van Hove J.L.K."/>
        </authorList>
    </citation>
    <scope>INVOLVEMENT IN COXPD41</scope>
    <scope>VARIANT COXPD41 LEU-136</scope>
    <scope>CHARACTERIZATION OF VARIANT COXPD41 LEU-136</scope>
</reference>
<feature type="transit peptide" description="Mitochondrion" evidence="2">
    <location>
        <begin position="1"/>
        <end position="41"/>
    </location>
</feature>
<feature type="chain" id="PRO_0000010710" description="Glutamyl-tRNA(Gln) amidotransferase subunit B, mitochondrial">
    <location>
        <begin position="42"/>
        <end position="557"/>
    </location>
</feature>
<feature type="region of interest" description="Disordered" evidence="4">
    <location>
        <begin position="26"/>
        <end position="45"/>
    </location>
</feature>
<feature type="compositionally biased region" description="Polar residues" evidence="4">
    <location>
        <begin position="32"/>
        <end position="45"/>
    </location>
</feature>
<feature type="modified residue" description="N6-succinyllysine" evidence="1">
    <location>
        <position position="529"/>
    </location>
</feature>
<feature type="sequence variant" id="VAR_049128" description="In dbSNP:rs11556167.">
    <original>A</original>
    <variation>D</variation>
    <location>
        <position position="30"/>
    </location>
</feature>
<feature type="sequence variant" id="VAR_083986" description="In COXPD41; uncertain significance; dbSNP:rs376766195." evidence="6">
    <original>F</original>
    <variation>L</variation>
    <location>
        <position position="136"/>
    </location>
</feature>
<feature type="sequence conflict" description="In Ref. 4; BAD96607." evidence="8" ref="4">
    <original>H</original>
    <variation>R</variation>
    <location>
        <position position="317"/>
    </location>
</feature>
<feature type="sequence conflict" description="In Ref. 2; AAF36119." evidence="8" ref="2">
    <original>EP</original>
    <variation>DK</variation>
    <location>
        <begin position="418"/>
        <end position="419"/>
    </location>
</feature>
<feature type="sequence conflict" description="In Ref. 4; BAD96607." evidence="8" ref="4">
    <original>N</original>
    <variation>D</variation>
    <location>
        <position position="521"/>
    </location>
</feature>
<organism>
    <name type="scientific">Homo sapiens</name>
    <name type="common">Human</name>
    <dbReference type="NCBI Taxonomy" id="9606"/>
    <lineage>
        <taxon>Eukaryota</taxon>
        <taxon>Metazoa</taxon>
        <taxon>Chordata</taxon>
        <taxon>Craniata</taxon>
        <taxon>Vertebrata</taxon>
        <taxon>Euteleostomi</taxon>
        <taxon>Mammalia</taxon>
        <taxon>Eutheria</taxon>
        <taxon>Euarchontoglires</taxon>
        <taxon>Primates</taxon>
        <taxon>Haplorrhini</taxon>
        <taxon>Catarrhini</taxon>
        <taxon>Hominidae</taxon>
        <taxon>Homo</taxon>
    </lineage>
</organism>
<name>GATB_HUMAN</name>